<gene>
    <name evidence="1" type="primary">truA</name>
    <name type="ordered locus">PAM_229</name>
</gene>
<reference key="1">
    <citation type="journal article" date="2004" name="Nat. Genet.">
        <title>Reductive evolution suggested from the complete genome sequence of a plant-pathogenic phytoplasma.</title>
        <authorList>
            <person name="Oshima K."/>
            <person name="Kakizawa S."/>
            <person name="Nishigawa H."/>
            <person name="Jung H.-Y."/>
            <person name="Wei W."/>
            <person name="Suzuki S."/>
            <person name="Arashida R."/>
            <person name="Nakata D."/>
            <person name="Miyata S."/>
            <person name="Ugaki M."/>
            <person name="Namba S."/>
        </authorList>
    </citation>
    <scope>NUCLEOTIDE SEQUENCE [LARGE SCALE GENOMIC DNA]</scope>
    <source>
        <strain>OY-M</strain>
    </source>
</reference>
<evidence type="ECO:0000255" key="1">
    <source>
        <dbReference type="HAMAP-Rule" id="MF_00171"/>
    </source>
</evidence>
<feature type="chain" id="PRO_0000057424" description="tRNA pseudouridine synthase A">
    <location>
        <begin position="1"/>
        <end position="243"/>
    </location>
</feature>
<feature type="active site" description="Nucleophile" evidence="1">
    <location>
        <position position="54"/>
    </location>
</feature>
<feature type="binding site" evidence="1">
    <location>
        <position position="112"/>
    </location>
    <ligand>
        <name>substrate</name>
    </ligand>
</feature>
<dbReference type="EC" id="5.4.99.12" evidence="1"/>
<dbReference type="EMBL" id="AP006628">
    <property type="protein sequence ID" value="BAD04314.1"/>
    <property type="molecule type" value="Genomic_DNA"/>
</dbReference>
<dbReference type="SMR" id="P60351"/>
<dbReference type="STRING" id="262768.PAM_229"/>
<dbReference type="KEGG" id="poy:PAM_229"/>
<dbReference type="eggNOG" id="COG0101">
    <property type="taxonomic scope" value="Bacteria"/>
</dbReference>
<dbReference type="HOGENOM" id="CLU_014673_0_1_14"/>
<dbReference type="BioCyc" id="OYEL262768:G1G26-275-MONOMER"/>
<dbReference type="Proteomes" id="UP000002523">
    <property type="component" value="Chromosome"/>
</dbReference>
<dbReference type="GO" id="GO:0003723">
    <property type="term" value="F:RNA binding"/>
    <property type="evidence" value="ECO:0007669"/>
    <property type="project" value="InterPro"/>
</dbReference>
<dbReference type="GO" id="GO:0160147">
    <property type="term" value="F:tRNA pseudouridine(38-40) synthase activity"/>
    <property type="evidence" value="ECO:0007669"/>
    <property type="project" value="UniProtKB-EC"/>
</dbReference>
<dbReference type="GO" id="GO:0031119">
    <property type="term" value="P:tRNA pseudouridine synthesis"/>
    <property type="evidence" value="ECO:0007669"/>
    <property type="project" value="UniProtKB-UniRule"/>
</dbReference>
<dbReference type="CDD" id="cd02570">
    <property type="entry name" value="PseudoU_synth_EcTruA"/>
    <property type="match status" value="1"/>
</dbReference>
<dbReference type="FunFam" id="3.30.70.580:FF:000001">
    <property type="entry name" value="tRNA pseudouridine synthase A"/>
    <property type="match status" value="1"/>
</dbReference>
<dbReference type="Gene3D" id="3.30.70.660">
    <property type="entry name" value="Pseudouridine synthase I, catalytic domain, C-terminal subdomain"/>
    <property type="match status" value="1"/>
</dbReference>
<dbReference type="Gene3D" id="3.30.70.580">
    <property type="entry name" value="Pseudouridine synthase I, catalytic domain, N-terminal subdomain"/>
    <property type="match status" value="1"/>
</dbReference>
<dbReference type="HAMAP" id="MF_00171">
    <property type="entry name" value="TruA"/>
    <property type="match status" value="1"/>
</dbReference>
<dbReference type="InterPro" id="IPR020103">
    <property type="entry name" value="PsdUridine_synth_cat_dom_sf"/>
</dbReference>
<dbReference type="InterPro" id="IPR001406">
    <property type="entry name" value="PsdUridine_synth_TruA"/>
</dbReference>
<dbReference type="InterPro" id="IPR020097">
    <property type="entry name" value="PsdUridine_synth_TruA_a/b_dom"/>
</dbReference>
<dbReference type="InterPro" id="IPR020095">
    <property type="entry name" value="PsdUridine_synth_TruA_C"/>
</dbReference>
<dbReference type="InterPro" id="IPR020094">
    <property type="entry name" value="TruA/RsuA/RluB/E/F_N"/>
</dbReference>
<dbReference type="NCBIfam" id="TIGR00071">
    <property type="entry name" value="hisT_truA"/>
    <property type="match status" value="1"/>
</dbReference>
<dbReference type="PANTHER" id="PTHR11142">
    <property type="entry name" value="PSEUDOURIDYLATE SYNTHASE"/>
    <property type="match status" value="1"/>
</dbReference>
<dbReference type="PANTHER" id="PTHR11142:SF0">
    <property type="entry name" value="TRNA PSEUDOURIDINE SYNTHASE-LIKE 1"/>
    <property type="match status" value="1"/>
</dbReference>
<dbReference type="Pfam" id="PF01416">
    <property type="entry name" value="PseudoU_synth_1"/>
    <property type="match status" value="2"/>
</dbReference>
<dbReference type="PIRSF" id="PIRSF001430">
    <property type="entry name" value="tRNA_psdUrid_synth"/>
    <property type="match status" value="1"/>
</dbReference>
<dbReference type="SUPFAM" id="SSF55120">
    <property type="entry name" value="Pseudouridine synthase"/>
    <property type="match status" value="1"/>
</dbReference>
<sequence>MQHFFYKLILSYDGTCYYGYQKQPQKITVQQTFEKALKKMTHQNIPTFAASRTDKGVHSQGQTLHFQTTFFLKPTHFQKTLNYLLPPDIRVRQMNFATPNFHARYSAKSKIYQYVFSKKPLNAFNHHFQIFADKLYFDKITKALKFIEGTHNFFAFTSETQPKNFSKTIFQAFLKETSHKYILVFHGNGFLKYMIRFLVGSLIEIGKNKLSLEQFQAMLLGNTTKKATLLAPSKALVLKKIFY</sequence>
<accession>P60351</accession>
<protein>
    <recommendedName>
        <fullName evidence="1">tRNA pseudouridine synthase A</fullName>
        <ecNumber evidence="1">5.4.99.12</ecNumber>
    </recommendedName>
    <alternativeName>
        <fullName evidence="1">tRNA pseudouridine(38-40) synthase</fullName>
    </alternativeName>
    <alternativeName>
        <fullName evidence="1">tRNA pseudouridylate synthase I</fullName>
    </alternativeName>
    <alternativeName>
        <fullName evidence="1">tRNA-uridine isomerase I</fullName>
    </alternativeName>
</protein>
<organism>
    <name type="scientific">Onion yellows phytoplasma (strain OY-M)</name>
    <dbReference type="NCBI Taxonomy" id="262768"/>
    <lineage>
        <taxon>Bacteria</taxon>
        <taxon>Bacillati</taxon>
        <taxon>Mycoplasmatota</taxon>
        <taxon>Mollicutes</taxon>
        <taxon>Acholeplasmatales</taxon>
        <taxon>Acholeplasmataceae</taxon>
        <taxon>Candidatus Phytoplasma</taxon>
        <taxon>16SrI (Aster yellows group)</taxon>
    </lineage>
</organism>
<name>TRUA_ONYPE</name>
<proteinExistence type="inferred from homology"/>
<comment type="function">
    <text evidence="1">Formation of pseudouridine at positions 38, 39 and 40 in the anticodon stem and loop of transfer RNAs.</text>
</comment>
<comment type="catalytic activity">
    <reaction evidence="1">
        <text>uridine(38/39/40) in tRNA = pseudouridine(38/39/40) in tRNA</text>
        <dbReference type="Rhea" id="RHEA:22376"/>
        <dbReference type="Rhea" id="RHEA-COMP:10085"/>
        <dbReference type="Rhea" id="RHEA-COMP:10087"/>
        <dbReference type="ChEBI" id="CHEBI:65314"/>
        <dbReference type="ChEBI" id="CHEBI:65315"/>
        <dbReference type="EC" id="5.4.99.12"/>
    </reaction>
</comment>
<comment type="subunit">
    <text evidence="1">Homodimer.</text>
</comment>
<comment type="similarity">
    <text evidence="1">Belongs to the tRNA pseudouridine synthase TruA family.</text>
</comment>
<keyword id="KW-0413">Isomerase</keyword>
<keyword id="KW-0819">tRNA processing</keyword>